<gene>
    <name evidence="1" type="primary">luxS</name>
    <name type="ordered locus">LMHCC_1287</name>
</gene>
<feature type="chain" id="PRO_1000118540" description="S-ribosylhomocysteine lyase">
    <location>
        <begin position="1"/>
        <end position="155"/>
    </location>
</feature>
<feature type="binding site" evidence="1">
    <location>
        <position position="57"/>
    </location>
    <ligand>
        <name>Fe cation</name>
        <dbReference type="ChEBI" id="CHEBI:24875"/>
    </ligand>
</feature>
<feature type="binding site" evidence="1">
    <location>
        <position position="61"/>
    </location>
    <ligand>
        <name>Fe cation</name>
        <dbReference type="ChEBI" id="CHEBI:24875"/>
    </ligand>
</feature>
<feature type="binding site" evidence="1">
    <location>
        <position position="124"/>
    </location>
    <ligand>
        <name>Fe cation</name>
        <dbReference type="ChEBI" id="CHEBI:24875"/>
    </ligand>
</feature>
<dbReference type="EC" id="4.4.1.21" evidence="1"/>
<dbReference type="EMBL" id="CP001175">
    <property type="protein sequence ID" value="ACK39633.1"/>
    <property type="molecule type" value="Genomic_DNA"/>
</dbReference>
<dbReference type="RefSeq" id="WP_012581407.1">
    <property type="nucleotide sequence ID" value="NC_011660.1"/>
</dbReference>
<dbReference type="SMR" id="B8DG43"/>
<dbReference type="KEGG" id="lmh:LMHCC_1287"/>
<dbReference type="HOGENOM" id="CLU_107531_2_0_9"/>
<dbReference type="GO" id="GO:0005506">
    <property type="term" value="F:iron ion binding"/>
    <property type="evidence" value="ECO:0007669"/>
    <property type="project" value="InterPro"/>
</dbReference>
<dbReference type="GO" id="GO:0043768">
    <property type="term" value="F:S-ribosylhomocysteine lyase activity"/>
    <property type="evidence" value="ECO:0007669"/>
    <property type="project" value="UniProtKB-UniRule"/>
</dbReference>
<dbReference type="GO" id="GO:0009372">
    <property type="term" value="P:quorum sensing"/>
    <property type="evidence" value="ECO:0007669"/>
    <property type="project" value="UniProtKB-UniRule"/>
</dbReference>
<dbReference type="Gene3D" id="3.30.1360.80">
    <property type="entry name" value="S-ribosylhomocysteinase (LuxS)"/>
    <property type="match status" value="1"/>
</dbReference>
<dbReference type="HAMAP" id="MF_00091">
    <property type="entry name" value="LuxS"/>
    <property type="match status" value="1"/>
</dbReference>
<dbReference type="InterPro" id="IPR037005">
    <property type="entry name" value="LuxS_sf"/>
</dbReference>
<dbReference type="InterPro" id="IPR011249">
    <property type="entry name" value="Metalloenz_LuxS/M16"/>
</dbReference>
<dbReference type="InterPro" id="IPR003815">
    <property type="entry name" value="S-ribosylhomocysteinase"/>
</dbReference>
<dbReference type="NCBIfam" id="NF002604">
    <property type="entry name" value="PRK02260.1-4"/>
    <property type="match status" value="1"/>
</dbReference>
<dbReference type="PANTHER" id="PTHR35799">
    <property type="entry name" value="S-RIBOSYLHOMOCYSTEINE LYASE"/>
    <property type="match status" value="1"/>
</dbReference>
<dbReference type="PANTHER" id="PTHR35799:SF1">
    <property type="entry name" value="S-RIBOSYLHOMOCYSTEINE LYASE"/>
    <property type="match status" value="1"/>
</dbReference>
<dbReference type="Pfam" id="PF02664">
    <property type="entry name" value="LuxS"/>
    <property type="match status" value="1"/>
</dbReference>
<dbReference type="PIRSF" id="PIRSF006160">
    <property type="entry name" value="AI2"/>
    <property type="match status" value="1"/>
</dbReference>
<dbReference type="PRINTS" id="PR01487">
    <property type="entry name" value="LUXSPROTEIN"/>
</dbReference>
<dbReference type="SUPFAM" id="SSF63411">
    <property type="entry name" value="LuxS/MPP-like metallohydrolase"/>
    <property type="match status" value="1"/>
</dbReference>
<reference key="1">
    <citation type="journal article" date="2011" name="J. Bacteriol.">
        <title>Genome sequence of lineage III Listeria monocytogenes strain HCC23.</title>
        <authorList>
            <person name="Steele C.L."/>
            <person name="Donaldson J.R."/>
            <person name="Paul D."/>
            <person name="Banes M.M."/>
            <person name="Arick T."/>
            <person name="Bridges S.M."/>
            <person name="Lawrence M.L."/>
        </authorList>
    </citation>
    <scope>NUCLEOTIDE SEQUENCE [LARGE SCALE GENOMIC DNA]</scope>
    <source>
        <strain>HCC23</strain>
    </source>
</reference>
<name>LUXS_LISMH</name>
<comment type="function">
    <text evidence="1">Involved in the synthesis of autoinducer 2 (AI-2) which is secreted by bacteria and is used to communicate both the cell density and the metabolic potential of the environment. The regulation of gene expression in response to changes in cell density is called quorum sensing. Catalyzes the transformation of S-ribosylhomocysteine (RHC) to homocysteine (HC) and 4,5-dihydroxy-2,3-pentadione (DPD).</text>
</comment>
<comment type="catalytic activity">
    <reaction evidence="1">
        <text>S-(5-deoxy-D-ribos-5-yl)-L-homocysteine = (S)-4,5-dihydroxypentane-2,3-dione + L-homocysteine</text>
        <dbReference type="Rhea" id="RHEA:17753"/>
        <dbReference type="ChEBI" id="CHEBI:29484"/>
        <dbReference type="ChEBI" id="CHEBI:58195"/>
        <dbReference type="ChEBI" id="CHEBI:58199"/>
        <dbReference type="EC" id="4.4.1.21"/>
    </reaction>
</comment>
<comment type="cofactor">
    <cofactor evidence="1">
        <name>Fe cation</name>
        <dbReference type="ChEBI" id="CHEBI:24875"/>
    </cofactor>
    <text evidence="1">Binds 1 Fe cation per subunit.</text>
</comment>
<comment type="subunit">
    <text evidence="1">Homodimer.</text>
</comment>
<comment type="similarity">
    <text evidence="1">Belongs to the LuxS family.</text>
</comment>
<keyword id="KW-0071">Autoinducer synthesis</keyword>
<keyword id="KW-0408">Iron</keyword>
<keyword id="KW-0456">Lyase</keyword>
<keyword id="KW-0479">Metal-binding</keyword>
<keyword id="KW-0673">Quorum sensing</keyword>
<proteinExistence type="inferred from homology"/>
<organism>
    <name type="scientific">Listeria monocytogenes serotype 4a (strain HCC23)</name>
    <dbReference type="NCBI Taxonomy" id="552536"/>
    <lineage>
        <taxon>Bacteria</taxon>
        <taxon>Bacillati</taxon>
        <taxon>Bacillota</taxon>
        <taxon>Bacilli</taxon>
        <taxon>Bacillales</taxon>
        <taxon>Listeriaceae</taxon>
        <taxon>Listeria</taxon>
    </lineage>
</organism>
<accession>B8DG43</accession>
<sequence length="155" mass="17494">MAEKMNVESFNLDHTKVKAPFVRLAGTKVGLHGDEIYKYDVRFKQPNKEHMEMPALHSLEHLMAELARNHTDKVVDISPMGCQTGFYMSFINFSDYDDALDVLAKTLADVLEAKEVPACNEVQCGWAASHSLEGAKELAEEFLAKRSEWKNVFGE</sequence>
<evidence type="ECO:0000255" key="1">
    <source>
        <dbReference type="HAMAP-Rule" id="MF_00091"/>
    </source>
</evidence>
<protein>
    <recommendedName>
        <fullName evidence="1">S-ribosylhomocysteine lyase</fullName>
        <ecNumber evidence="1">4.4.1.21</ecNumber>
    </recommendedName>
    <alternativeName>
        <fullName evidence="1">AI-2 synthesis protein</fullName>
    </alternativeName>
    <alternativeName>
        <fullName evidence="1">Autoinducer-2 production protein LuxS</fullName>
    </alternativeName>
</protein>